<sequence length="68" mass="7789">MPKLKTKSAVKKRFKLTASGKVVASQAGKKHFMRRRTKAQIRNLRGTTILCDQDGYNIKKYFLPYGTN</sequence>
<protein>
    <recommendedName>
        <fullName evidence="1">Large ribosomal subunit protein bL35</fullName>
    </recommendedName>
    <alternativeName>
        <fullName evidence="2">50S ribosomal protein L35</fullName>
    </alternativeName>
</protein>
<feature type="chain" id="PRO_0000258742" description="Large ribosomal subunit protein bL35">
    <location>
        <begin position="1"/>
        <end position="68"/>
    </location>
</feature>
<organism>
    <name type="scientific">Rickettsia bellii (strain RML369-C)</name>
    <dbReference type="NCBI Taxonomy" id="336407"/>
    <lineage>
        <taxon>Bacteria</taxon>
        <taxon>Pseudomonadati</taxon>
        <taxon>Pseudomonadota</taxon>
        <taxon>Alphaproteobacteria</taxon>
        <taxon>Rickettsiales</taxon>
        <taxon>Rickettsiaceae</taxon>
        <taxon>Rickettsieae</taxon>
        <taxon>Rickettsia</taxon>
        <taxon>belli group</taxon>
    </lineage>
</organism>
<reference key="1">
    <citation type="journal article" date="2006" name="PLoS Genet.">
        <title>Genome sequence of Rickettsia bellii illuminates the role of amoebae in gene exchanges between intracellular pathogens.</title>
        <authorList>
            <person name="Ogata H."/>
            <person name="La Scola B."/>
            <person name="Audic S."/>
            <person name="Renesto P."/>
            <person name="Blanc G."/>
            <person name="Robert C."/>
            <person name="Fournier P.-E."/>
            <person name="Claverie J.-M."/>
            <person name="Raoult D."/>
        </authorList>
    </citation>
    <scope>NUCLEOTIDE SEQUENCE [LARGE SCALE GENOMIC DNA]</scope>
    <source>
        <strain>RML369-C</strain>
    </source>
</reference>
<gene>
    <name evidence="1" type="primary">rpmI</name>
    <name type="ordered locus">RBE_0864</name>
</gene>
<proteinExistence type="inferred from homology"/>
<keyword id="KW-0687">Ribonucleoprotein</keyword>
<keyword id="KW-0689">Ribosomal protein</keyword>
<comment type="similarity">
    <text evidence="1">Belongs to the bacterial ribosomal protein bL35 family.</text>
</comment>
<evidence type="ECO:0000255" key="1">
    <source>
        <dbReference type="HAMAP-Rule" id="MF_00514"/>
    </source>
</evidence>
<evidence type="ECO:0000305" key="2"/>
<dbReference type="EMBL" id="CP000087">
    <property type="protein sequence ID" value="ABE04945.1"/>
    <property type="molecule type" value="Genomic_DNA"/>
</dbReference>
<dbReference type="RefSeq" id="WP_011477530.1">
    <property type="nucleotide sequence ID" value="NC_007940.1"/>
</dbReference>
<dbReference type="SMR" id="Q1RI69"/>
<dbReference type="KEGG" id="rbe:RBE_0864"/>
<dbReference type="eggNOG" id="COG0291">
    <property type="taxonomic scope" value="Bacteria"/>
</dbReference>
<dbReference type="HOGENOM" id="CLU_169643_2_1_5"/>
<dbReference type="OrthoDB" id="9804851at2"/>
<dbReference type="Proteomes" id="UP000001951">
    <property type="component" value="Chromosome"/>
</dbReference>
<dbReference type="GO" id="GO:0022625">
    <property type="term" value="C:cytosolic large ribosomal subunit"/>
    <property type="evidence" value="ECO:0007669"/>
    <property type="project" value="TreeGrafter"/>
</dbReference>
<dbReference type="GO" id="GO:0003735">
    <property type="term" value="F:structural constituent of ribosome"/>
    <property type="evidence" value="ECO:0007669"/>
    <property type="project" value="InterPro"/>
</dbReference>
<dbReference type="GO" id="GO:0006412">
    <property type="term" value="P:translation"/>
    <property type="evidence" value="ECO:0007669"/>
    <property type="project" value="UniProtKB-UniRule"/>
</dbReference>
<dbReference type="FunFam" id="4.10.410.60:FF:000001">
    <property type="entry name" value="50S ribosomal protein L35"/>
    <property type="match status" value="1"/>
</dbReference>
<dbReference type="Gene3D" id="4.10.410.60">
    <property type="match status" value="1"/>
</dbReference>
<dbReference type="HAMAP" id="MF_00514">
    <property type="entry name" value="Ribosomal_bL35"/>
    <property type="match status" value="1"/>
</dbReference>
<dbReference type="InterPro" id="IPR001706">
    <property type="entry name" value="Ribosomal_bL35"/>
</dbReference>
<dbReference type="InterPro" id="IPR021137">
    <property type="entry name" value="Ribosomal_bL35-like"/>
</dbReference>
<dbReference type="InterPro" id="IPR018265">
    <property type="entry name" value="Ribosomal_bL35_CS"/>
</dbReference>
<dbReference type="InterPro" id="IPR037229">
    <property type="entry name" value="Ribosomal_bL35_sf"/>
</dbReference>
<dbReference type="NCBIfam" id="TIGR00001">
    <property type="entry name" value="rpmI_bact"/>
    <property type="match status" value="1"/>
</dbReference>
<dbReference type="PANTHER" id="PTHR33343">
    <property type="entry name" value="54S RIBOSOMAL PROTEIN BL35M"/>
    <property type="match status" value="1"/>
</dbReference>
<dbReference type="PANTHER" id="PTHR33343:SF1">
    <property type="entry name" value="LARGE RIBOSOMAL SUBUNIT PROTEIN BL35M"/>
    <property type="match status" value="1"/>
</dbReference>
<dbReference type="Pfam" id="PF01632">
    <property type="entry name" value="Ribosomal_L35p"/>
    <property type="match status" value="1"/>
</dbReference>
<dbReference type="PRINTS" id="PR00064">
    <property type="entry name" value="RIBOSOMALL35"/>
</dbReference>
<dbReference type="SUPFAM" id="SSF143034">
    <property type="entry name" value="L35p-like"/>
    <property type="match status" value="1"/>
</dbReference>
<dbReference type="PROSITE" id="PS00936">
    <property type="entry name" value="RIBOSOMAL_L35"/>
    <property type="match status" value="1"/>
</dbReference>
<name>RL35_RICBR</name>
<accession>Q1RI69</accession>